<proteinExistence type="inferred from homology"/>
<accession>Q6QHD9</accession>
<feature type="chain" id="PRO_0000143289" description="Maturase K">
    <location>
        <begin position="1"/>
        <end position="502"/>
    </location>
</feature>
<sequence>MEKFQGYLEFDGARQQSFLYPLFFRDYIYVLAYDHGLNRLNRNRPIFLENADYDKKYSSLIVKRLILRMYEQNRLIIPTKDLNKNLGHTNNFYYQMISVLFAVIVEIPFSLRLGSSIEGKNVKKSYNLQSLHSIFPFLEDKLSHFNYVLDVLIPYPIHLEILVQTLRYRVKDASSLHFFRFCLYEYCNWKNFDSKKKSILNPRFLLFLYNSHVCEYESIFFFLRKQSSHLRSTSYDVFFERILFYGKIQHFFKVFVNNFSALLGLLKDPFLHYVRYHGKYILATKDTPLLMNKWKYYFVNLWQCYFSVWFQSQKVNINQLSKDNLEFLGYLSSLRLNPLVVRSQMLENSFLIDNVRIKLDSNIPISSIIGSLAKDKFCNVLGHPISKATWTDSSDSDILNRFVRICRNISHYYSGSSNKKNLYRIKYILRLCCVKTLARKHKSTVRAFLKRLGSGLLEEFLTGEDQVLSLIFPRSDYASKRLYRVRVWYLDILYLNDLVNHE</sequence>
<evidence type="ECO:0000255" key="1">
    <source>
        <dbReference type="HAMAP-Rule" id="MF_01390"/>
    </source>
</evidence>
<evidence type="ECO:0000305" key="2"/>
<reference key="1">
    <citation type="submission" date="2004-02" db="EMBL/GenBank/DDBJ databases">
        <title>Chloroplast DNA studies of wild 2n=18 Brassica oleracea relatives using PCR-RFLP and sequencing techniques.</title>
        <authorList>
            <person name="Simonetti E."/>
            <person name="Martin J.P."/>
            <person name="Gonzalez L.M."/>
            <person name="Aguinagalde I."/>
        </authorList>
    </citation>
    <scope>NUCLEOTIDE SEQUENCE [GENOMIC DNA]</scope>
</reference>
<protein>
    <recommendedName>
        <fullName evidence="1">Maturase K</fullName>
    </recommendedName>
    <alternativeName>
        <fullName evidence="1">Intron maturase</fullName>
    </alternativeName>
</protein>
<dbReference type="EMBL" id="AY541619">
    <property type="protein sequence ID" value="AAS48152.1"/>
    <property type="status" value="ALT_INIT"/>
    <property type="molecule type" value="Genomic_DNA"/>
</dbReference>
<dbReference type="Proteomes" id="UP000011750">
    <property type="component" value="Unplaced"/>
</dbReference>
<dbReference type="GO" id="GO:0009507">
    <property type="term" value="C:chloroplast"/>
    <property type="evidence" value="ECO:0007669"/>
    <property type="project" value="UniProtKB-SubCell"/>
</dbReference>
<dbReference type="GO" id="GO:0003723">
    <property type="term" value="F:RNA binding"/>
    <property type="evidence" value="ECO:0007669"/>
    <property type="project" value="UniProtKB-KW"/>
</dbReference>
<dbReference type="GO" id="GO:0006397">
    <property type="term" value="P:mRNA processing"/>
    <property type="evidence" value="ECO:0007669"/>
    <property type="project" value="UniProtKB-KW"/>
</dbReference>
<dbReference type="GO" id="GO:0008380">
    <property type="term" value="P:RNA splicing"/>
    <property type="evidence" value="ECO:0007669"/>
    <property type="project" value="UniProtKB-UniRule"/>
</dbReference>
<dbReference type="GO" id="GO:0008033">
    <property type="term" value="P:tRNA processing"/>
    <property type="evidence" value="ECO:0007669"/>
    <property type="project" value="UniProtKB-KW"/>
</dbReference>
<dbReference type="HAMAP" id="MF_01390">
    <property type="entry name" value="MatK"/>
    <property type="match status" value="1"/>
</dbReference>
<dbReference type="InterPro" id="IPR024937">
    <property type="entry name" value="Domain_X"/>
</dbReference>
<dbReference type="InterPro" id="IPR002866">
    <property type="entry name" value="Maturase_MatK"/>
</dbReference>
<dbReference type="InterPro" id="IPR024942">
    <property type="entry name" value="Maturase_MatK_N"/>
</dbReference>
<dbReference type="PANTHER" id="PTHR34811">
    <property type="entry name" value="MATURASE K"/>
    <property type="match status" value="1"/>
</dbReference>
<dbReference type="PANTHER" id="PTHR34811:SF1">
    <property type="entry name" value="MATURASE K"/>
    <property type="match status" value="1"/>
</dbReference>
<dbReference type="Pfam" id="PF01348">
    <property type="entry name" value="Intron_maturas2"/>
    <property type="match status" value="1"/>
</dbReference>
<dbReference type="Pfam" id="PF01824">
    <property type="entry name" value="MatK_N"/>
    <property type="match status" value="1"/>
</dbReference>
<organism>
    <name type="scientific">Brassica campestris</name>
    <name type="common">Field mustard</name>
    <dbReference type="NCBI Taxonomy" id="3711"/>
    <lineage>
        <taxon>Eukaryota</taxon>
        <taxon>Viridiplantae</taxon>
        <taxon>Streptophyta</taxon>
        <taxon>Embryophyta</taxon>
        <taxon>Tracheophyta</taxon>
        <taxon>Spermatophyta</taxon>
        <taxon>Magnoliopsida</taxon>
        <taxon>eudicotyledons</taxon>
        <taxon>Gunneridae</taxon>
        <taxon>Pentapetalae</taxon>
        <taxon>rosids</taxon>
        <taxon>malvids</taxon>
        <taxon>Brassicales</taxon>
        <taxon>Brassicaceae</taxon>
        <taxon>Brassiceae</taxon>
        <taxon>Brassica</taxon>
    </lineage>
</organism>
<comment type="function">
    <text evidence="1">Usually encoded in the trnK tRNA gene intron. Probably assists in splicing its own and other chloroplast group II introns.</text>
</comment>
<comment type="subcellular location">
    <subcellularLocation>
        <location>Plastid</location>
        <location>Chloroplast</location>
    </subcellularLocation>
</comment>
<comment type="similarity">
    <text evidence="1">Belongs to the intron maturase 2 family. MatK subfamily.</text>
</comment>
<comment type="sequence caution" evidence="2">
    <conflict type="erroneous initiation">
        <sequence resource="EMBL-CDS" id="AAS48152"/>
    </conflict>
</comment>
<geneLocation type="chloroplast"/>
<keyword id="KW-0150">Chloroplast</keyword>
<keyword id="KW-0507">mRNA processing</keyword>
<keyword id="KW-0934">Plastid</keyword>
<keyword id="KW-1185">Reference proteome</keyword>
<keyword id="KW-0694">RNA-binding</keyword>
<keyword id="KW-0819">tRNA processing</keyword>
<name>MATK_BRACM</name>
<gene>
    <name evidence="1" type="primary">matK</name>
</gene>